<feature type="chain" id="PRO_0000295401" description="Polyadenylate-binding protein, cytoplasmic and nuclear">
    <location>
        <begin position="1"/>
        <end position="629"/>
    </location>
</feature>
<feature type="domain" description="RRM 1" evidence="2">
    <location>
        <begin position="46"/>
        <end position="124"/>
    </location>
</feature>
<feature type="domain" description="RRM 2" evidence="2">
    <location>
        <begin position="134"/>
        <end position="211"/>
    </location>
</feature>
<feature type="domain" description="RRM 3" evidence="2">
    <location>
        <begin position="227"/>
        <end position="304"/>
    </location>
</feature>
<feature type="domain" description="RRM 4" evidence="2">
    <location>
        <begin position="330"/>
        <end position="407"/>
    </location>
</feature>
<feature type="domain" description="PABC" evidence="3">
    <location>
        <begin position="542"/>
        <end position="624"/>
    </location>
</feature>
<feature type="region of interest" description="Disordered" evidence="4">
    <location>
        <begin position="1"/>
        <end position="47"/>
    </location>
</feature>
<feature type="region of interest" description="Disordered" evidence="4">
    <location>
        <begin position="465"/>
        <end position="543"/>
    </location>
</feature>
<feature type="compositionally biased region" description="Basic and acidic residues" evidence="4">
    <location>
        <begin position="26"/>
        <end position="42"/>
    </location>
</feature>
<feature type="compositionally biased region" description="Low complexity" evidence="4">
    <location>
        <begin position="493"/>
        <end position="506"/>
    </location>
</feature>
<feature type="compositionally biased region" description="Low complexity" evidence="4">
    <location>
        <begin position="514"/>
        <end position="531"/>
    </location>
</feature>
<dbReference type="EMBL" id="CR382129">
    <property type="protein sequence ID" value="CAG81584.1"/>
    <property type="molecule type" value="Genomic_DNA"/>
</dbReference>
<dbReference type="RefSeq" id="XP_501289.1">
    <property type="nucleotide sequence ID" value="XM_501289.1"/>
</dbReference>
<dbReference type="SMR" id="Q6CDH3"/>
<dbReference type="FunCoup" id="Q6CDH3">
    <property type="interactions" value="1365"/>
</dbReference>
<dbReference type="STRING" id="284591.Q6CDH3"/>
<dbReference type="EnsemblFungi" id="CAG81584">
    <property type="protein sequence ID" value="CAG81584"/>
    <property type="gene ID" value="YALI0_C00539g"/>
</dbReference>
<dbReference type="KEGG" id="yli:2909177"/>
<dbReference type="VEuPathDB" id="FungiDB:YALI0_C00539g"/>
<dbReference type="HOGENOM" id="CLU_012062_22_4_1"/>
<dbReference type="InParanoid" id="Q6CDH3"/>
<dbReference type="OMA" id="QQPGFMP"/>
<dbReference type="OrthoDB" id="117144at4891"/>
<dbReference type="Proteomes" id="UP000001300">
    <property type="component" value="Chromosome C"/>
</dbReference>
<dbReference type="GO" id="GO:0010494">
    <property type="term" value="C:cytoplasmic stress granule"/>
    <property type="evidence" value="ECO:0000318"/>
    <property type="project" value="GO_Central"/>
</dbReference>
<dbReference type="GO" id="GO:0005829">
    <property type="term" value="C:cytosol"/>
    <property type="evidence" value="ECO:0000318"/>
    <property type="project" value="GO_Central"/>
</dbReference>
<dbReference type="GO" id="GO:0005634">
    <property type="term" value="C:nucleus"/>
    <property type="evidence" value="ECO:0000318"/>
    <property type="project" value="GO_Central"/>
</dbReference>
<dbReference type="GO" id="GO:0071014">
    <property type="term" value="C:post-mRNA release spliceosomal complex"/>
    <property type="evidence" value="ECO:0007669"/>
    <property type="project" value="EnsemblFungi"/>
</dbReference>
<dbReference type="GO" id="GO:1990904">
    <property type="term" value="C:ribonucleoprotein complex"/>
    <property type="evidence" value="ECO:0000318"/>
    <property type="project" value="GO_Central"/>
</dbReference>
<dbReference type="GO" id="GO:0003730">
    <property type="term" value="F:mRNA 3'-UTR binding"/>
    <property type="evidence" value="ECO:0000318"/>
    <property type="project" value="GO_Central"/>
</dbReference>
<dbReference type="GO" id="GO:0008143">
    <property type="term" value="F:poly(A) binding"/>
    <property type="evidence" value="ECO:0000318"/>
    <property type="project" value="GO_Central"/>
</dbReference>
<dbReference type="GO" id="GO:0008266">
    <property type="term" value="F:poly(U) RNA binding"/>
    <property type="evidence" value="ECO:0000318"/>
    <property type="project" value="GO_Central"/>
</dbReference>
<dbReference type="GO" id="GO:0006397">
    <property type="term" value="P:mRNA processing"/>
    <property type="evidence" value="ECO:0007669"/>
    <property type="project" value="UniProtKB-KW"/>
</dbReference>
<dbReference type="GO" id="GO:0051028">
    <property type="term" value="P:mRNA transport"/>
    <property type="evidence" value="ECO:0007669"/>
    <property type="project" value="UniProtKB-KW"/>
</dbReference>
<dbReference type="GO" id="GO:0000289">
    <property type="term" value="P:nuclear-transcribed mRNA poly(A) tail shortening"/>
    <property type="evidence" value="ECO:0007669"/>
    <property type="project" value="EnsemblFungi"/>
</dbReference>
<dbReference type="GO" id="GO:0006417">
    <property type="term" value="P:regulation of translation"/>
    <property type="evidence" value="ECO:0007669"/>
    <property type="project" value="UniProtKB-KW"/>
</dbReference>
<dbReference type="CDD" id="cd12378">
    <property type="entry name" value="RRM1_I_PABPs"/>
    <property type="match status" value="1"/>
</dbReference>
<dbReference type="CDD" id="cd12379">
    <property type="entry name" value="RRM2_I_PABPs"/>
    <property type="match status" value="1"/>
</dbReference>
<dbReference type="CDD" id="cd12381">
    <property type="entry name" value="RRM4_I_PABPs"/>
    <property type="match status" value="1"/>
</dbReference>
<dbReference type="FunFam" id="3.30.70.330:FF:002233">
    <property type="match status" value="1"/>
</dbReference>
<dbReference type="FunFam" id="3.30.70.330:FF:000003">
    <property type="entry name" value="Polyadenylate-binding protein"/>
    <property type="match status" value="1"/>
</dbReference>
<dbReference type="FunFam" id="3.30.70.330:FF:000211">
    <property type="entry name" value="Polyadenylate-binding protein"/>
    <property type="match status" value="1"/>
</dbReference>
<dbReference type="Gene3D" id="3.30.70.330">
    <property type="match status" value="4"/>
</dbReference>
<dbReference type="Gene3D" id="1.10.1900.10">
    <property type="entry name" value="c-terminal domain of poly(a) binding protein"/>
    <property type="match status" value="1"/>
</dbReference>
<dbReference type="InterPro" id="IPR012677">
    <property type="entry name" value="Nucleotide-bd_a/b_plait_sf"/>
</dbReference>
<dbReference type="InterPro" id="IPR036053">
    <property type="entry name" value="PABP-dom"/>
</dbReference>
<dbReference type="InterPro" id="IPR006515">
    <property type="entry name" value="PABP_1234"/>
</dbReference>
<dbReference type="InterPro" id="IPR002004">
    <property type="entry name" value="PABP_HYD_C"/>
</dbReference>
<dbReference type="InterPro" id="IPR034364">
    <property type="entry name" value="PABP_RRM1"/>
</dbReference>
<dbReference type="InterPro" id="IPR035979">
    <property type="entry name" value="RBD_domain_sf"/>
</dbReference>
<dbReference type="InterPro" id="IPR045305">
    <property type="entry name" value="RRM2_I_PABPs"/>
</dbReference>
<dbReference type="InterPro" id="IPR000504">
    <property type="entry name" value="RRM_dom"/>
</dbReference>
<dbReference type="NCBIfam" id="TIGR01628">
    <property type="entry name" value="PABP-1234"/>
    <property type="match status" value="1"/>
</dbReference>
<dbReference type="PANTHER" id="PTHR24012">
    <property type="entry name" value="RNA BINDING PROTEIN"/>
    <property type="match status" value="1"/>
</dbReference>
<dbReference type="Pfam" id="PF00658">
    <property type="entry name" value="MLLE"/>
    <property type="match status" value="1"/>
</dbReference>
<dbReference type="Pfam" id="PF00076">
    <property type="entry name" value="RRM_1"/>
    <property type="match status" value="4"/>
</dbReference>
<dbReference type="SMART" id="SM00517">
    <property type="entry name" value="PolyA"/>
    <property type="match status" value="1"/>
</dbReference>
<dbReference type="SMART" id="SM00360">
    <property type="entry name" value="RRM"/>
    <property type="match status" value="4"/>
</dbReference>
<dbReference type="SUPFAM" id="SSF63570">
    <property type="entry name" value="PABC (PABP) domain"/>
    <property type="match status" value="1"/>
</dbReference>
<dbReference type="SUPFAM" id="SSF54928">
    <property type="entry name" value="RNA-binding domain, RBD"/>
    <property type="match status" value="2"/>
</dbReference>
<dbReference type="PROSITE" id="PS51309">
    <property type="entry name" value="PABC"/>
    <property type="match status" value="1"/>
</dbReference>
<dbReference type="PROSITE" id="PS50102">
    <property type="entry name" value="RRM"/>
    <property type="match status" value="4"/>
</dbReference>
<organism>
    <name type="scientific">Yarrowia lipolytica (strain CLIB 122 / E 150)</name>
    <name type="common">Yeast</name>
    <name type="synonym">Candida lipolytica</name>
    <dbReference type="NCBI Taxonomy" id="284591"/>
    <lineage>
        <taxon>Eukaryota</taxon>
        <taxon>Fungi</taxon>
        <taxon>Dikarya</taxon>
        <taxon>Ascomycota</taxon>
        <taxon>Saccharomycotina</taxon>
        <taxon>Dipodascomycetes</taxon>
        <taxon>Dipodascales</taxon>
        <taxon>Dipodascales incertae sedis</taxon>
        <taxon>Yarrowia</taxon>
    </lineage>
</organism>
<proteinExistence type="inferred from homology"/>
<accession>Q6CDH3</accession>
<name>PABP_YARLI</name>
<protein>
    <recommendedName>
        <fullName>Polyadenylate-binding protein, cytoplasmic and nuclear</fullName>
        <shortName>PABP</shortName>
        <shortName>Poly(A)-binding protein</shortName>
    </recommendedName>
    <alternativeName>
        <fullName>Polyadenylate tail-binding protein</fullName>
    </alternativeName>
</protein>
<sequence length="629" mass="69217">MTLENKAEASPATKEETTTEAAPAEGEAKTESSEEKGSKEDQGDNASLYVGELDPSVTEAMLFEIFNPIGPVTSVRVCRDAITRRSLGYAYVNFHNQADGIRALEELNYSPIKERPCRIMWSQRDPALRKTGAGNIYIKNLDPAIDNKALHDTFSAFGQILSCKIATDEFGNSRGFGFVHYESAESAESAIQHVNGMLLNDKKVFVGPHVPKSDRMQSFEEQKNSFTNVFIKNLGTEITEAEFEELVNKFGETSSVHLSTNDEGKPTGFGFVDYKEHDVAVKAIDGLSETEFKGNKLFAGRAKKKYERADELRKQYEASRLEKLNKYQGVNLYIKNLDDTIDDDKLRAEFAPHGTITSAKVMVDEAGKSKGFGFVCYSSPEEATKAVTEMNHRLVAGKPLYVVLAQRKDVRRSQLQQQIQAKNQMRLQQQAAAGGLPGQYMGNPGVFYPGQPGFMPPGRGGMPFGANPQMMMRPPMPPQNQFPPRGVPGGPNMYGAPPQGYQQGGFPPQGPMRGGQPPRSGQPGPQGQFRGAPRRKDGESRVADSISNALENAPEEQHKQLVGEALYPKVLAEKAIDGNAEFAGKITGMLLEMPIKEILEVIDDEEGLQAQINDAITAYNEYLNSQKEE</sequence>
<comment type="function">
    <text evidence="1">Binds the poly(A) tail of mRNA. Appears to be an important mediator of the multiple roles of the poly(A) tail in mRNA biogenesis, stability and translation. In the nucleus, involved in both mRNA cleavage and polyadenylation. Is also required for efficient mRNA export to the cytoplasm. Acts in concert with a poly(A)-specific nuclease (PAN) to affect poly(A) tail shortening, which may occur concomitantly with either nucleocytoplasmic mRNA transport or translational initiation. In the cytoplasm, stimulates translation initiation and regulates mRNA decay through translation termination-coupled poly(A) shortening, probably mediated by PAN (By similarity).</text>
</comment>
<comment type="subcellular location">
    <subcellularLocation>
        <location evidence="1">Cytoplasm</location>
    </subcellularLocation>
    <subcellularLocation>
        <location evidence="1">Nucleus</location>
    </subcellularLocation>
</comment>
<comment type="similarity">
    <text evidence="5">Belongs to the polyadenylate-binding protein type-1 family.</text>
</comment>
<gene>
    <name type="primary">PAB1</name>
    <name type="ordered locus">YALI0C00539g</name>
</gene>
<keyword id="KW-0963">Cytoplasm</keyword>
<keyword id="KW-0507">mRNA processing</keyword>
<keyword id="KW-0509">mRNA transport</keyword>
<keyword id="KW-0539">Nucleus</keyword>
<keyword id="KW-1185">Reference proteome</keyword>
<keyword id="KW-0677">Repeat</keyword>
<keyword id="KW-0694">RNA-binding</keyword>
<keyword id="KW-0810">Translation regulation</keyword>
<keyword id="KW-0813">Transport</keyword>
<evidence type="ECO:0000250" key="1"/>
<evidence type="ECO:0000255" key="2">
    <source>
        <dbReference type="PROSITE-ProRule" id="PRU00176"/>
    </source>
</evidence>
<evidence type="ECO:0000255" key="3">
    <source>
        <dbReference type="PROSITE-ProRule" id="PRU00641"/>
    </source>
</evidence>
<evidence type="ECO:0000256" key="4">
    <source>
        <dbReference type="SAM" id="MobiDB-lite"/>
    </source>
</evidence>
<evidence type="ECO:0000305" key="5"/>
<reference key="1">
    <citation type="journal article" date="2004" name="Nature">
        <title>Genome evolution in yeasts.</title>
        <authorList>
            <person name="Dujon B."/>
            <person name="Sherman D."/>
            <person name="Fischer G."/>
            <person name="Durrens P."/>
            <person name="Casaregola S."/>
            <person name="Lafontaine I."/>
            <person name="de Montigny J."/>
            <person name="Marck C."/>
            <person name="Neuveglise C."/>
            <person name="Talla E."/>
            <person name="Goffard N."/>
            <person name="Frangeul L."/>
            <person name="Aigle M."/>
            <person name="Anthouard V."/>
            <person name="Babour A."/>
            <person name="Barbe V."/>
            <person name="Barnay S."/>
            <person name="Blanchin S."/>
            <person name="Beckerich J.-M."/>
            <person name="Beyne E."/>
            <person name="Bleykasten C."/>
            <person name="Boisrame A."/>
            <person name="Boyer J."/>
            <person name="Cattolico L."/>
            <person name="Confanioleri F."/>
            <person name="de Daruvar A."/>
            <person name="Despons L."/>
            <person name="Fabre E."/>
            <person name="Fairhead C."/>
            <person name="Ferry-Dumazet H."/>
            <person name="Groppi A."/>
            <person name="Hantraye F."/>
            <person name="Hennequin C."/>
            <person name="Jauniaux N."/>
            <person name="Joyet P."/>
            <person name="Kachouri R."/>
            <person name="Kerrest A."/>
            <person name="Koszul R."/>
            <person name="Lemaire M."/>
            <person name="Lesur I."/>
            <person name="Ma L."/>
            <person name="Muller H."/>
            <person name="Nicaud J.-M."/>
            <person name="Nikolski M."/>
            <person name="Oztas S."/>
            <person name="Ozier-Kalogeropoulos O."/>
            <person name="Pellenz S."/>
            <person name="Potier S."/>
            <person name="Richard G.-F."/>
            <person name="Straub M.-L."/>
            <person name="Suleau A."/>
            <person name="Swennen D."/>
            <person name="Tekaia F."/>
            <person name="Wesolowski-Louvel M."/>
            <person name="Westhof E."/>
            <person name="Wirth B."/>
            <person name="Zeniou-Meyer M."/>
            <person name="Zivanovic Y."/>
            <person name="Bolotin-Fukuhara M."/>
            <person name="Thierry A."/>
            <person name="Bouchier C."/>
            <person name="Caudron B."/>
            <person name="Scarpelli C."/>
            <person name="Gaillardin C."/>
            <person name="Weissenbach J."/>
            <person name="Wincker P."/>
            <person name="Souciet J.-L."/>
        </authorList>
    </citation>
    <scope>NUCLEOTIDE SEQUENCE [LARGE SCALE GENOMIC DNA]</scope>
    <source>
        <strain>CLIB 122 / E 150</strain>
    </source>
</reference>